<protein>
    <recommendedName>
        <fullName evidence="1">Pyrophosphatase PpaX</fullName>
        <ecNumber evidence="1">3.6.1.1</ecNumber>
    </recommendedName>
</protein>
<sequence>MRINTVLFDLDGTLINTNELIISSFLHTLNTYYPNQYKREDVLPFIGPSLHDTFSKIDESKVEEMITSYREFNHDHHDELVEEYETVYETVRELKKQGYKVGIVTTKARQTVEMGLQLSKLDEFFDVVVTIDDVEHVKPHPEPLQKALELLDAKPEEALMVGDNHHDIVGGQNAGTKTAAVSWTLKGRAYLEAYKPDFMLDKMSDLLPILSNMNRS</sequence>
<feature type="chain" id="PRO_0000056836" description="Pyrophosphatase PpaX">
    <location>
        <begin position="1"/>
        <end position="216"/>
    </location>
</feature>
<feature type="active site" description="Nucleophile" evidence="1">
    <location>
        <position position="9"/>
    </location>
</feature>
<reference key="1">
    <citation type="journal article" date="2003" name="Nature">
        <title>Genome sequence of Bacillus cereus and comparative analysis with Bacillus anthracis.</title>
        <authorList>
            <person name="Ivanova N."/>
            <person name="Sorokin A."/>
            <person name="Anderson I."/>
            <person name="Galleron N."/>
            <person name="Candelon B."/>
            <person name="Kapatral V."/>
            <person name="Bhattacharyya A."/>
            <person name="Reznik G."/>
            <person name="Mikhailova N."/>
            <person name="Lapidus A."/>
            <person name="Chu L."/>
            <person name="Mazur M."/>
            <person name="Goltsman E."/>
            <person name="Larsen N."/>
            <person name="D'Souza M."/>
            <person name="Walunas T."/>
            <person name="Grechkin Y."/>
            <person name="Pusch G."/>
            <person name="Haselkorn R."/>
            <person name="Fonstein M."/>
            <person name="Ehrlich S.D."/>
            <person name="Overbeek R."/>
            <person name="Kyrpides N.C."/>
        </authorList>
    </citation>
    <scope>NUCLEOTIDE SEQUENCE [LARGE SCALE GENOMIC DNA]</scope>
    <source>
        <strain>ATCC 14579 / DSM 31 / CCUG 7414 / JCM 2152 / NBRC 15305 / NCIMB 9373 / NCTC 2599 / NRRL B-3711</strain>
    </source>
</reference>
<organism>
    <name type="scientific">Bacillus cereus (strain ATCC 14579 / DSM 31 / CCUG 7414 / JCM 2152 / NBRC 15305 / NCIMB 9373 / NCTC 2599 / NRRL B-3711)</name>
    <dbReference type="NCBI Taxonomy" id="226900"/>
    <lineage>
        <taxon>Bacteria</taxon>
        <taxon>Bacillati</taxon>
        <taxon>Bacillota</taxon>
        <taxon>Bacilli</taxon>
        <taxon>Bacillales</taxon>
        <taxon>Bacillaceae</taxon>
        <taxon>Bacillus</taxon>
        <taxon>Bacillus cereus group</taxon>
    </lineage>
</organism>
<keyword id="KW-0378">Hydrolase</keyword>
<keyword id="KW-0460">Magnesium</keyword>
<keyword id="KW-1185">Reference proteome</keyword>
<evidence type="ECO:0000255" key="1">
    <source>
        <dbReference type="HAMAP-Rule" id="MF_01250"/>
    </source>
</evidence>
<name>PPAX_BACCR</name>
<comment type="function">
    <text evidence="1">Hydrolyzes pyrophosphate formed during P-Ser-HPr dephosphorylation by HPrK/P. Might play a role in controlling the intracellular pyrophosphate pool.</text>
</comment>
<comment type="catalytic activity">
    <reaction evidence="1">
        <text>diphosphate + H2O = 2 phosphate + H(+)</text>
        <dbReference type="Rhea" id="RHEA:24576"/>
        <dbReference type="ChEBI" id="CHEBI:15377"/>
        <dbReference type="ChEBI" id="CHEBI:15378"/>
        <dbReference type="ChEBI" id="CHEBI:33019"/>
        <dbReference type="ChEBI" id="CHEBI:43474"/>
        <dbReference type="EC" id="3.6.1.1"/>
    </reaction>
</comment>
<comment type="cofactor">
    <cofactor evidence="1">
        <name>Mg(2+)</name>
        <dbReference type="ChEBI" id="CHEBI:18420"/>
    </cofactor>
</comment>
<comment type="similarity">
    <text evidence="1">Belongs to the HAD-like hydrolase superfamily. PpaX family.</text>
</comment>
<dbReference type="EC" id="3.6.1.1" evidence="1"/>
<dbReference type="EMBL" id="AE016877">
    <property type="protein sequence ID" value="AAP12027.1"/>
    <property type="molecule type" value="Genomic_DNA"/>
</dbReference>
<dbReference type="RefSeq" id="NP_834826.1">
    <property type="nucleotide sequence ID" value="NC_004722.1"/>
</dbReference>
<dbReference type="RefSeq" id="WP_001222403.1">
    <property type="nucleotide sequence ID" value="NZ_CP138336.1"/>
</dbReference>
<dbReference type="SMR" id="Q815I8"/>
<dbReference type="STRING" id="226900.BC_5162"/>
<dbReference type="GeneID" id="67469439"/>
<dbReference type="KEGG" id="bce:BC5162"/>
<dbReference type="PATRIC" id="fig|226900.8.peg.5320"/>
<dbReference type="HOGENOM" id="CLU_045011_19_3_9"/>
<dbReference type="OrthoDB" id="9807630at2"/>
<dbReference type="Proteomes" id="UP000001417">
    <property type="component" value="Chromosome"/>
</dbReference>
<dbReference type="GO" id="GO:0005829">
    <property type="term" value="C:cytosol"/>
    <property type="evidence" value="ECO:0000318"/>
    <property type="project" value="GO_Central"/>
</dbReference>
<dbReference type="GO" id="GO:0004427">
    <property type="term" value="F:inorganic diphosphate phosphatase activity"/>
    <property type="evidence" value="ECO:0007669"/>
    <property type="project" value="UniProtKB-UniRule"/>
</dbReference>
<dbReference type="GO" id="GO:0000287">
    <property type="term" value="F:magnesium ion binding"/>
    <property type="evidence" value="ECO:0007669"/>
    <property type="project" value="UniProtKB-UniRule"/>
</dbReference>
<dbReference type="GO" id="GO:0008967">
    <property type="term" value="F:phosphoglycolate phosphatase activity"/>
    <property type="evidence" value="ECO:0000318"/>
    <property type="project" value="GO_Central"/>
</dbReference>
<dbReference type="GO" id="GO:0006281">
    <property type="term" value="P:DNA repair"/>
    <property type="evidence" value="ECO:0000318"/>
    <property type="project" value="GO_Central"/>
</dbReference>
<dbReference type="CDD" id="cd02616">
    <property type="entry name" value="HAD_PPase"/>
    <property type="match status" value="1"/>
</dbReference>
<dbReference type="FunFam" id="3.40.50.1000:FF:000022">
    <property type="entry name" value="Phosphoglycolate phosphatase"/>
    <property type="match status" value="1"/>
</dbReference>
<dbReference type="FunFam" id="1.10.150.240:FF:000008">
    <property type="entry name" value="Pyrophosphatase PpaX"/>
    <property type="match status" value="1"/>
</dbReference>
<dbReference type="Gene3D" id="3.40.50.1000">
    <property type="entry name" value="HAD superfamily/HAD-like"/>
    <property type="match status" value="1"/>
</dbReference>
<dbReference type="Gene3D" id="1.10.150.240">
    <property type="entry name" value="Putative phosphatase, domain 2"/>
    <property type="match status" value="1"/>
</dbReference>
<dbReference type="HAMAP" id="MF_01250">
    <property type="entry name" value="Pyrophosphat_PpaX"/>
    <property type="match status" value="1"/>
</dbReference>
<dbReference type="InterPro" id="IPR050155">
    <property type="entry name" value="HAD-like_hydrolase_sf"/>
</dbReference>
<dbReference type="InterPro" id="IPR036412">
    <property type="entry name" value="HAD-like_sf"/>
</dbReference>
<dbReference type="InterPro" id="IPR006439">
    <property type="entry name" value="HAD-SF_hydro_IA"/>
</dbReference>
<dbReference type="InterPro" id="IPR006549">
    <property type="entry name" value="HAD-SF_hydro_IIIA"/>
</dbReference>
<dbReference type="InterPro" id="IPR041492">
    <property type="entry name" value="HAD_2"/>
</dbReference>
<dbReference type="InterPro" id="IPR023214">
    <property type="entry name" value="HAD_sf"/>
</dbReference>
<dbReference type="InterPro" id="IPR023198">
    <property type="entry name" value="PGP-like_dom2"/>
</dbReference>
<dbReference type="InterPro" id="IPR023733">
    <property type="entry name" value="Pyrophosphatase_Ppax"/>
</dbReference>
<dbReference type="NCBIfam" id="TIGR01549">
    <property type="entry name" value="HAD-SF-IA-v1"/>
    <property type="match status" value="1"/>
</dbReference>
<dbReference type="NCBIfam" id="TIGR01509">
    <property type="entry name" value="HAD-SF-IA-v3"/>
    <property type="match status" value="1"/>
</dbReference>
<dbReference type="NCBIfam" id="TIGR01662">
    <property type="entry name" value="HAD-SF-IIIA"/>
    <property type="match status" value="1"/>
</dbReference>
<dbReference type="NCBIfam" id="NF009804">
    <property type="entry name" value="PRK13288.1"/>
    <property type="match status" value="1"/>
</dbReference>
<dbReference type="PANTHER" id="PTHR43434">
    <property type="entry name" value="PHOSPHOGLYCOLATE PHOSPHATASE"/>
    <property type="match status" value="1"/>
</dbReference>
<dbReference type="PANTHER" id="PTHR43434:SF26">
    <property type="entry name" value="PYROPHOSPHATASE PPAX"/>
    <property type="match status" value="1"/>
</dbReference>
<dbReference type="Pfam" id="PF13419">
    <property type="entry name" value="HAD_2"/>
    <property type="match status" value="1"/>
</dbReference>
<dbReference type="PRINTS" id="PR00413">
    <property type="entry name" value="HADHALOGNASE"/>
</dbReference>
<dbReference type="SFLD" id="SFLDG01135">
    <property type="entry name" value="C1.5.6:_HAD__Beta-PGM__Phospha"/>
    <property type="match status" value="1"/>
</dbReference>
<dbReference type="SFLD" id="SFLDG01129">
    <property type="entry name" value="C1.5:_HAD__Beta-PGM__Phosphata"/>
    <property type="match status" value="1"/>
</dbReference>
<dbReference type="SUPFAM" id="SSF56784">
    <property type="entry name" value="HAD-like"/>
    <property type="match status" value="1"/>
</dbReference>
<proteinExistence type="inferred from homology"/>
<accession>Q815I8</accession>
<gene>
    <name evidence="1" type="primary">ppaX</name>
    <name type="ordered locus">BC_5162</name>
</gene>